<comment type="function">
    <text evidence="1">Binds to DNA and alters its conformation. May be involved in regulation of gene expression, nucleoid organization and DNA protection.</text>
</comment>
<comment type="subunit">
    <text evidence="1">Homodimer.</text>
</comment>
<comment type="subcellular location">
    <subcellularLocation>
        <location evidence="1">Cytoplasm</location>
        <location evidence="1">Nucleoid</location>
    </subcellularLocation>
</comment>
<comment type="similarity">
    <text evidence="1">Belongs to the YbaB/EbfC family.</text>
</comment>
<reference key="1">
    <citation type="journal article" date="2010" name="J. Bacteriol.">
        <title>Complete genome sequence of the aerobic facultative methanotroph Methylocella silvestris BL2.</title>
        <authorList>
            <person name="Chen Y."/>
            <person name="Crombie A."/>
            <person name="Rahman M.T."/>
            <person name="Dedysh S.N."/>
            <person name="Liesack W."/>
            <person name="Stott M.B."/>
            <person name="Alam M."/>
            <person name="Theisen A.R."/>
            <person name="Murrell J.C."/>
            <person name="Dunfield P.F."/>
        </authorList>
    </citation>
    <scope>NUCLEOTIDE SEQUENCE [LARGE SCALE GENOMIC DNA]</scope>
    <source>
        <strain>DSM 15510 / CIP 108128 / LMG 27833 / NCIMB 13906 / BL2</strain>
    </source>
</reference>
<keyword id="KW-0963">Cytoplasm</keyword>
<keyword id="KW-0238">DNA-binding</keyword>
<keyword id="KW-1185">Reference proteome</keyword>
<proteinExistence type="inferred from homology"/>
<dbReference type="EMBL" id="CP001280">
    <property type="protein sequence ID" value="ACK49254.1"/>
    <property type="molecule type" value="Genomic_DNA"/>
</dbReference>
<dbReference type="RefSeq" id="WP_012589324.1">
    <property type="nucleotide sequence ID" value="NC_011666.1"/>
</dbReference>
<dbReference type="SMR" id="B8EP16"/>
<dbReference type="STRING" id="395965.Msil_0275"/>
<dbReference type="KEGG" id="msl:Msil_0275"/>
<dbReference type="eggNOG" id="COG0718">
    <property type="taxonomic scope" value="Bacteria"/>
</dbReference>
<dbReference type="HOGENOM" id="CLU_140930_0_1_5"/>
<dbReference type="OrthoDB" id="9803080at2"/>
<dbReference type="Proteomes" id="UP000002257">
    <property type="component" value="Chromosome"/>
</dbReference>
<dbReference type="GO" id="GO:0043590">
    <property type="term" value="C:bacterial nucleoid"/>
    <property type="evidence" value="ECO:0007669"/>
    <property type="project" value="UniProtKB-UniRule"/>
</dbReference>
<dbReference type="GO" id="GO:0005829">
    <property type="term" value="C:cytosol"/>
    <property type="evidence" value="ECO:0007669"/>
    <property type="project" value="TreeGrafter"/>
</dbReference>
<dbReference type="GO" id="GO:0003677">
    <property type="term" value="F:DNA binding"/>
    <property type="evidence" value="ECO:0007669"/>
    <property type="project" value="UniProtKB-UniRule"/>
</dbReference>
<dbReference type="Gene3D" id="3.30.1310.10">
    <property type="entry name" value="Nucleoid-associated protein YbaB-like domain"/>
    <property type="match status" value="1"/>
</dbReference>
<dbReference type="HAMAP" id="MF_00274">
    <property type="entry name" value="DNA_YbaB_EbfC"/>
    <property type="match status" value="1"/>
</dbReference>
<dbReference type="InterPro" id="IPR036894">
    <property type="entry name" value="YbaB-like_sf"/>
</dbReference>
<dbReference type="InterPro" id="IPR004401">
    <property type="entry name" value="YbaB/EbfC"/>
</dbReference>
<dbReference type="NCBIfam" id="TIGR00103">
    <property type="entry name" value="DNA_YbaB_EbfC"/>
    <property type="match status" value="1"/>
</dbReference>
<dbReference type="PANTHER" id="PTHR33449">
    <property type="entry name" value="NUCLEOID-ASSOCIATED PROTEIN YBAB"/>
    <property type="match status" value="1"/>
</dbReference>
<dbReference type="PANTHER" id="PTHR33449:SF1">
    <property type="entry name" value="NUCLEOID-ASSOCIATED PROTEIN YBAB"/>
    <property type="match status" value="1"/>
</dbReference>
<dbReference type="Pfam" id="PF02575">
    <property type="entry name" value="YbaB_DNA_bd"/>
    <property type="match status" value="1"/>
</dbReference>
<dbReference type="PIRSF" id="PIRSF004555">
    <property type="entry name" value="UCP004555"/>
    <property type="match status" value="1"/>
</dbReference>
<dbReference type="SUPFAM" id="SSF82607">
    <property type="entry name" value="YbaB-like"/>
    <property type="match status" value="1"/>
</dbReference>
<evidence type="ECO:0000255" key="1">
    <source>
        <dbReference type="HAMAP-Rule" id="MF_00274"/>
    </source>
</evidence>
<gene>
    <name type="ordered locus">Msil_0275</name>
</gene>
<organism>
    <name type="scientific">Methylocella silvestris (strain DSM 15510 / CIP 108128 / LMG 27833 / NCIMB 13906 / BL2)</name>
    <dbReference type="NCBI Taxonomy" id="395965"/>
    <lineage>
        <taxon>Bacteria</taxon>
        <taxon>Pseudomonadati</taxon>
        <taxon>Pseudomonadota</taxon>
        <taxon>Alphaproteobacteria</taxon>
        <taxon>Hyphomicrobiales</taxon>
        <taxon>Beijerinckiaceae</taxon>
        <taxon>Methylocella</taxon>
    </lineage>
</organism>
<protein>
    <recommendedName>
        <fullName evidence="1">Nucleoid-associated protein Msil_0275</fullName>
    </recommendedName>
</protein>
<sequence>MRDMLGLMKQAQAMQEKIQQMQAEIERLEVEGQSGGGMVRVTLSAKGQLRNLAIDDQLIKADEKQILEDLIITAHEDARKKAERLMEEKMQGVTAGLALPPGMKLPF</sequence>
<accession>B8EP16</accession>
<feature type="chain" id="PRO_1000197666" description="Nucleoid-associated protein Msil_0275">
    <location>
        <begin position="1"/>
        <end position="107"/>
    </location>
</feature>
<name>Y275_METSB</name>